<proteinExistence type="evidence at protein level"/>
<dbReference type="EMBL" id="AF047025">
    <property type="protein sequence ID" value="AAC03117.1"/>
    <property type="molecule type" value="Genomic_DNA"/>
</dbReference>
<dbReference type="EMBL" id="AE004091">
    <property type="protein sequence ID" value="AAG07625.1"/>
    <property type="molecule type" value="Genomic_DNA"/>
</dbReference>
<dbReference type="PIR" id="C83113">
    <property type="entry name" value="C83113"/>
</dbReference>
<dbReference type="RefSeq" id="NP_252927.1">
    <property type="nucleotide sequence ID" value="NC_002516.2"/>
</dbReference>
<dbReference type="RefSeq" id="WP_003093672.1">
    <property type="nucleotide sequence ID" value="NZ_QZGE01000028.1"/>
</dbReference>
<dbReference type="PDB" id="7UNR">
    <property type="method" value="EM"/>
    <property type="resolution" value="2.90 A"/>
    <property type="chains" value="P=1-129"/>
</dbReference>
<dbReference type="PDB" id="7UNU">
    <property type="method" value="EM"/>
    <property type="resolution" value="2.90 A"/>
    <property type="chains" value="P=1-129"/>
</dbReference>
<dbReference type="PDB" id="7UNV">
    <property type="method" value="EM"/>
    <property type="resolution" value="2.70 A"/>
    <property type="chains" value="P=1-129"/>
</dbReference>
<dbReference type="PDB" id="7UNW">
    <property type="method" value="EM"/>
    <property type="resolution" value="2.60 A"/>
    <property type="chains" value="P=1-129"/>
</dbReference>
<dbReference type="PDB" id="8CD1">
    <property type="method" value="EM"/>
    <property type="resolution" value="3.00 A"/>
    <property type="chains" value="N=1-129"/>
</dbReference>
<dbReference type="PDB" id="8RWG">
    <property type="method" value="EM"/>
    <property type="resolution" value="2.46 A"/>
    <property type="chains" value="N=1-129"/>
</dbReference>
<dbReference type="PDBsum" id="7UNR"/>
<dbReference type="PDBsum" id="7UNU"/>
<dbReference type="PDBsum" id="7UNV"/>
<dbReference type="PDBsum" id="7UNW"/>
<dbReference type="PDBsum" id="8CD1"/>
<dbReference type="PDBsum" id="8RWG"/>
<dbReference type="EMDB" id="EMD-16566"/>
<dbReference type="EMDB" id="EMD-19547"/>
<dbReference type="EMDB" id="EMD-26630"/>
<dbReference type="EMDB" id="EMD-26633"/>
<dbReference type="EMDB" id="EMD-26634"/>
<dbReference type="EMDB" id="EMD-26635"/>
<dbReference type="SMR" id="O52761"/>
<dbReference type="FunCoup" id="O52761">
    <property type="interactions" value="899"/>
</dbReference>
<dbReference type="STRING" id="208964.PA4237"/>
<dbReference type="PaxDb" id="208964-PA4237"/>
<dbReference type="DNASU" id="881767"/>
<dbReference type="GeneID" id="77219224"/>
<dbReference type="GeneID" id="881767"/>
<dbReference type="KEGG" id="pae:PA4237"/>
<dbReference type="PATRIC" id="fig|208964.12.peg.4438"/>
<dbReference type="PseudoCAP" id="PA4237"/>
<dbReference type="HOGENOM" id="CLU_074407_2_0_6"/>
<dbReference type="InParanoid" id="O52761"/>
<dbReference type="OrthoDB" id="9809073at2"/>
<dbReference type="PhylomeDB" id="O52761"/>
<dbReference type="BioCyc" id="PAER208964:G1FZ6-4310-MONOMER"/>
<dbReference type="PRO" id="PR:O52761"/>
<dbReference type="Proteomes" id="UP000002438">
    <property type="component" value="Chromosome"/>
</dbReference>
<dbReference type="GO" id="GO:0022625">
    <property type="term" value="C:cytosolic large ribosomal subunit"/>
    <property type="evidence" value="ECO:0000318"/>
    <property type="project" value="GO_Central"/>
</dbReference>
<dbReference type="GO" id="GO:0003735">
    <property type="term" value="F:structural constituent of ribosome"/>
    <property type="evidence" value="ECO:0000318"/>
    <property type="project" value="GO_Central"/>
</dbReference>
<dbReference type="GO" id="GO:0006412">
    <property type="term" value="P:translation"/>
    <property type="evidence" value="ECO:0007669"/>
    <property type="project" value="UniProtKB-UniRule"/>
</dbReference>
<dbReference type="FunFam" id="3.90.1030.10:FF:000001">
    <property type="entry name" value="50S ribosomal protein L17"/>
    <property type="match status" value="1"/>
</dbReference>
<dbReference type="Gene3D" id="3.90.1030.10">
    <property type="entry name" value="Ribosomal protein L17"/>
    <property type="match status" value="1"/>
</dbReference>
<dbReference type="HAMAP" id="MF_01368">
    <property type="entry name" value="Ribosomal_bL17"/>
    <property type="match status" value="1"/>
</dbReference>
<dbReference type="InterPro" id="IPR000456">
    <property type="entry name" value="Ribosomal_bL17"/>
</dbReference>
<dbReference type="InterPro" id="IPR047859">
    <property type="entry name" value="Ribosomal_bL17_CS"/>
</dbReference>
<dbReference type="InterPro" id="IPR036373">
    <property type="entry name" value="Ribosomal_bL17_sf"/>
</dbReference>
<dbReference type="NCBIfam" id="TIGR00059">
    <property type="entry name" value="L17"/>
    <property type="match status" value="1"/>
</dbReference>
<dbReference type="PANTHER" id="PTHR14413:SF16">
    <property type="entry name" value="LARGE RIBOSOMAL SUBUNIT PROTEIN BL17M"/>
    <property type="match status" value="1"/>
</dbReference>
<dbReference type="PANTHER" id="PTHR14413">
    <property type="entry name" value="RIBOSOMAL PROTEIN L17"/>
    <property type="match status" value="1"/>
</dbReference>
<dbReference type="Pfam" id="PF01196">
    <property type="entry name" value="Ribosomal_L17"/>
    <property type="match status" value="1"/>
</dbReference>
<dbReference type="SUPFAM" id="SSF64263">
    <property type="entry name" value="Prokaryotic ribosomal protein L17"/>
    <property type="match status" value="1"/>
</dbReference>
<dbReference type="PROSITE" id="PS01167">
    <property type="entry name" value="RIBOSOMAL_L17"/>
    <property type="match status" value="1"/>
</dbReference>
<gene>
    <name evidence="1" type="primary">rplQ</name>
    <name type="ordered locus">PA4237</name>
</gene>
<organism>
    <name type="scientific">Pseudomonas aeruginosa (strain ATCC 15692 / DSM 22644 / CIP 104116 / JCM 14847 / LMG 12228 / 1C / PRS 101 / PAO1)</name>
    <dbReference type="NCBI Taxonomy" id="208964"/>
    <lineage>
        <taxon>Bacteria</taxon>
        <taxon>Pseudomonadati</taxon>
        <taxon>Pseudomonadota</taxon>
        <taxon>Gammaproteobacteria</taxon>
        <taxon>Pseudomonadales</taxon>
        <taxon>Pseudomonadaceae</taxon>
        <taxon>Pseudomonas</taxon>
    </lineage>
</organism>
<accession>O52761</accession>
<name>RL17_PSEAE</name>
<comment type="subunit">
    <text evidence="1">Part of the 50S ribosomal subunit. Contacts protein L32.</text>
</comment>
<comment type="similarity">
    <text evidence="1">Belongs to the bacterial ribosomal protein bL17 family.</text>
</comment>
<sequence>MRHRKSGRHLSRTSAHRKAMFQNMAVSLFEHELIKTTLPKAKELRRVAEPLITLAKEDSVANRRLAFDRTRSKAAVGKLFNDLGKRYANRPGGYLRILKCGFRAGDNAPMAYVELVDRPVGGEVVEAAE</sequence>
<protein>
    <recommendedName>
        <fullName evidence="1">Large ribosomal subunit protein bL17</fullName>
    </recommendedName>
    <alternativeName>
        <fullName evidence="2">50S ribosomal protein L17</fullName>
    </alternativeName>
</protein>
<reference key="1">
    <citation type="journal article" date="1999" name="J. Bacteriol.">
        <title>Bacterioferritin A modulates catalase A (KatA) activity and resistance to hydrogen peroxide in Pseudomonas aeruginosa.</title>
        <authorList>
            <person name="Ma J.-F."/>
            <person name="Ochsner U.A."/>
            <person name="Klotz M.G."/>
            <person name="Nanayakkara V.K."/>
            <person name="Howell M.L."/>
            <person name="Johnson Z."/>
            <person name="Posey J.E."/>
            <person name="Vasil M.L."/>
            <person name="Monaco J.J."/>
            <person name="Hassett D.J."/>
        </authorList>
    </citation>
    <scope>NUCLEOTIDE SEQUENCE [GENOMIC DNA]</scope>
    <source>
        <strain>FRD1</strain>
    </source>
</reference>
<reference key="2">
    <citation type="journal article" date="2000" name="Nature">
        <title>Complete genome sequence of Pseudomonas aeruginosa PAO1, an opportunistic pathogen.</title>
        <authorList>
            <person name="Stover C.K."/>
            <person name="Pham X.-Q.T."/>
            <person name="Erwin A.L."/>
            <person name="Mizoguchi S.D."/>
            <person name="Warrener P."/>
            <person name="Hickey M.J."/>
            <person name="Brinkman F.S.L."/>
            <person name="Hufnagle W.O."/>
            <person name="Kowalik D.J."/>
            <person name="Lagrou M."/>
            <person name="Garber R.L."/>
            <person name="Goltry L."/>
            <person name="Tolentino E."/>
            <person name="Westbrock-Wadman S."/>
            <person name="Yuan Y."/>
            <person name="Brody L.L."/>
            <person name="Coulter S.N."/>
            <person name="Folger K.R."/>
            <person name="Kas A."/>
            <person name="Larbig K."/>
            <person name="Lim R.M."/>
            <person name="Smith K.A."/>
            <person name="Spencer D.H."/>
            <person name="Wong G.K.-S."/>
            <person name="Wu Z."/>
            <person name="Paulsen I.T."/>
            <person name="Reizer J."/>
            <person name="Saier M.H. Jr."/>
            <person name="Hancock R.E.W."/>
            <person name="Lory S."/>
            <person name="Olson M.V."/>
        </authorList>
    </citation>
    <scope>NUCLEOTIDE SEQUENCE [LARGE SCALE GENOMIC DNA]</scope>
    <source>
        <strain>ATCC 15692 / DSM 22644 / CIP 104116 / JCM 14847 / LMG 12228 / 1C / PRS 101 / PAO1</strain>
    </source>
</reference>
<feature type="chain" id="PRO_0000175538" description="Large ribosomal subunit protein bL17">
    <location>
        <begin position="1"/>
        <end position="129"/>
    </location>
</feature>
<keyword id="KW-0002">3D-structure</keyword>
<keyword id="KW-1185">Reference proteome</keyword>
<keyword id="KW-0687">Ribonucleoprotein</keyword>
<keyword id="KW-0689">Ribosomal protein</keyword>
<evidence type="ECO:0000255" key="1">
    <source>
        <dbReference type="HAMAP-Rule" id="MF_01368"/>
    </source>
</evidence>
<evidence type="ECO:0000305" key="2"/>